<organism>
    <name type="scientific">Pyrobaculum aerophilum (strain ATCC 51768 / DSM 7523 / JCM 9630 / CIP 104966 / NBRC 100827 / IM2)</name>
    <dbReference type="NCBI Taxonomy" id="178306"/>
    <lineage>
        <taxon>Archaea</taxon>
        <taxon>Thermoproteota</taxon>
        <taxon>Thermoprotei</taxon>
        <taxon>Thermoproteales</taxon>
        <taxon>Thermoproteaceae</taxon>
        <taxon>Pyrobaculum</taxon>
    </lineage>
</organism>
<feature type="chain" id="PRO_0000145081" description="Carbamoyl phosphate synthase large chain">
    <location>
        <begin position="1"/>
        <end position="1024"/>
    </location>
</feature>
<feature type="domain" description="ATP-grasp 1" evidence="1">
    <location>
        <begin position="129"/>
        <end position="323"/>
    </location>
</feature>
<feature type="domain" description="ATP-grasp 2" evidence="1">
    <location>
        <begin position="660"/>
        <end position="849"/>
    </location>
</feature>
<feature type="domain" description="MGS-like" evidence="1">
    <location>
        <begin position="917"/>
        <end position="1024"/>
    </location>
</feature>
<feature type="region of interest" description="Carboxyphosphate synthetic domain" evidence="1">
    <location>
        <begin position="1"/>
        <end position="396"/>
    </location>
</feature>
<feature type="region of interest" description="Oligomerization domain" evidence="1">
    <location>
        <begin position="397"/>
        <end position="536"/>
    </location>
</feature>
<feature type="region of interest" description="Carbamoyl phosphate synthetic domain" evidence="1">
    <location>
        <begin position="536"/>
        <end position="917"/>
    </location>
</feature>
<feature type="region of interest" description="Allosteric domain" evidence="1">
    <location>
        <begin position="918"/>
        <end position="1024"/>
    </location>
</feature>
<feature type="binding site" evidence="1">
    <location>
        <position position="125"/>
    </location>
    <ligand>
        <name>ATP</name>
        <dbReference type="ChEBI" id="CHEBI:30616"/>
        <label>1</label>
    </ligand>
</feature>
<feature type="binding site" evidence="1">
    <location>
        <position position="165"/>
    </location>
    <ligand>
        <name>ATP</name>
        <dbReference type="ChEBI" id="CHEBI:30616"/>
        <label>1</label>
    </ligand>
</feature>
<feature type="binding site" evidence="1">
    <location>
        <position position="171"/>
    </location>
    <ligand>
        <name>ATP</name>
        <dbReference type="ChEBI" id="CHEBI:30616"/>
        <label>1</label>
    </ligand>
</feature>
<feature type="binding site" evidence="1">
    <location>
        <position position="172"/>
    </location>
    <ligand>
        <name>ATP</name>
        <dbReference type="ChEBI" id="CHEBI:30616"/>
        <label>1</label>
    </ligand>
</feature>
<feature type="binding site" evidence="1">
    <location>
        <position position="204"/>
    </location>
    <ligand>
        <name>ATP</name>
        <dbReference type="ChEBI" id="CHEBI:30616"/>
        <label>1</label>
    </ligand>
</feature>
<feature type="binding site" evidence="1">
    <location>
        <position position="206"/>
    </location>
    <ligand>
        <name>ATP</name>
        <dbReference type="ChEBI" id="CHEBI:30616"/>
        <label>1</label>
    </ligand>
</feature>
<feature type="binding site" evidence="1">
    <location>
        <position position="211"/>
    </location>
    <ligand>
        <name>ATP</name>
        <dbReference type="ChEBI" id="CHEBI:30616"/>
        <label>1</label>
    </ligand>
</feature>
<feature type="binding site" evidence="1">
    <location>
        <position position="237"/>
    </location>
    <ligand>
        <name>ATP</name>
        <dbReference type="ChEBI" id="CHEBI:30616"/>
        <label>1</label>
    </ligand>
</feature>
<feature type="binding site" evidence="1">
    <location>
        <position position="238"/>
    </location>
    <ligand>
        <name>ATP</name>
        <dbReference type="ChEBI" id="CHEBI:30616"/>
        <label>1</label>
    </ligand>
</feature>
<feature type="binding site" evidence="1">
    <location>
        <position position="239"/>
    </location>
    <ligand>
        <name>ATP</name>
        <dbReference type="ChEBI" id="CHEBI:30616"/>
        <label>1</label>
    </ligand>
</feature>
<feature type="binding site" evidence="1">
    <location>
        <position position="280"/>
    </location>
    <ligand>
        <name>ATP</name>
        <dbReference type="ChEBI" id="CHEBI:30616"/>
        <label>1</label>
    </ligand>
</feature>
<feature type="binding site" evidence="1">
    <location>
        <position position="280"/>
    </location>
    <ligand>
        <name>Mg(2+)</name>
        <dbReference type="ChEBI" id="CHEBI:18420"/>
        <label>1</label>
    </ligand>
</feature>
<feature type="binding site" evidence="1">
    <location>
        <position position="280"/>
    </location>
    <ligand>
        <name>Mn(2+)</name>
        <dbReference type="ChEBI" id="CHEBI:29035"/>
        <label>1</label>
    </ligand>
</feature>
<feature type="binding site" evidence="1">
    <location>
        <position position="294"/>
    </location>
    <ligand>
        <name>ATP</name>
        <dbReference type="ChEBI" id="CHEBI:30616"/>
        <label>1</label>
    </ligand>
</feature>
<feature type="binding site" evidence="1">
    <location>
        <position position="294"/>
    </location>
    <ligand>
        <name>Mg(2+)</name>
        <dbReference type="ChEBI" id="CHEBI:18420"/>
        <label>1</label>
    </ligand>
</feature>
<feature type="binding site" evidence="1">
    <location>
        <position position="294"/>
    </location>
    <ligand>
        <name>Mg(2+)</name>
        <dbReference type="ChEBI" id="CHEBI:18420"/>
        <label>2</label>
    </ligand>
</feature>
<feature type="binding site" evidence="1">
    <location>
        <position position="294"/>
    </location>
    <ligand>
        <name>Mn(2+)</name>
        <dbReference type="ChEBI" id="CHEBI:29035"/>
        <label>1</label>
    </ligand>
</feature>
<feature type="binding site" evidence="1">
    <location>
        <position position="294"/>
    </location>
    <ligand>
        <name>Mn(2+)</name>
        <dbReference type="ChEBI" id="CHEBI:29035"/>
        <label>2</label>
    </ligand>
</feature>
<feature type="binding site" evidence="1">
    <location>
        <position position="296"/>
    </location>
    <ligand>
        <name>Mg(2+)</name>
        <dbReference type="ChEBI" id="CHEBI:18420"/>
        <label>2</label>
    </ligand>
</feature>
<feature type="binding site" evidence="1">
    <location>
        <position position="296"/>
    </location>
    <ligand>
        <name>Mn(2+)</name>
        <dbReference type="ChEBI" id="CHEBI:29035"/>
        <label>2</label>
    </ligand>
</feature>
<feature type="binding site" evidence="1">
    <location>
        <position position="696"/>
    </location>
    <ligand>
        <name>ATP</name>
        <dbReference type="ChEBI" id="CHEBI:30616"/>
        <label>2</label>
    </ligand>
</feature>
<feature type="binding site" evidence="1">
    <location>
        <position position="735"/>
    </location>
    <ligand>
        <name>ATP</name>
        <dbReference type="ChEBI" id="CHEBI:30616"/>
        <label>2</label>
    </ligand>
</feature>
<feature type="binding site" evidence="1">
    <location>
        <position position="742"/>
    </location>
    <ligand>
        <name>ATP</name>
        <dbReference type="ChEBI" id="CHEBI:30616"/>
        <label>2</label>
    </ligand>
</feature>
<feature type="binding site" evidence="1">
    <location>
        <position position="766"/>
    </location>
    <ligand>
        <name>ATP</name>
        <dbReference type="ChEBI" id="CHEBI:30616"/>
        <label>2</label>
    </ligand>
</feature>
<feature type="binding site" evidence="1">
    <location>
        <position position="767"/>
    </location>
    <ligand>
        <name>ATP</name>
        <dbReference type="ChEBI" id="CHEBI:30616"/>
        <label>2</label>
    </ligand>
</feature>
<feature type="binding site" evidence="1">
    <location>
        <position position="768"/>
    </location>
    <ligand>
        <name>ATP</name>
        <dbReference type="ChEBI" id="CHEBI:30616"/>
        <label>2</label>
    </ligand>
</feature>
<feature type="binding site" evidence="1">
    <location>
        <position position="769"/>
    </location>
    <ligand>
        <name>ATP</name>
        <dbReference type="ChEBI" id="CHEBI:30616"/>
        <label>2</label>
    </ligand>
</feature>
<feature type="binding site" evidence="1">
    <location>
        <position position="809"/>
    </location>
    <ligand>
        <name>ATP</name>
        <dbReference type="ChEBI" id="CHEBI:30616"/>
        <label>2</label>
    </ligand>
</feature>
<feature type="binding site" evidence="1">
    <location>
        <position position="809"/>
    </location>
    <ligand>
        <name>Mg(2+)</name>
        <dbReference type="ChEBI" id="CHEBI:18420"/>
        <label>3</label>
    </ligand>
</feature>
<feature type="binding site" evidence="1">
    <location>
        <position position="809"/>
    </location>
    <ligand>
        <name>Mn(2+)</name>
        <dbReference type="ChEBI" id="CHEBI:29035"/>
        <label>3</label>
    </ligand>
</feature>
<feature type="binding site" evidence="1">
    <location>
        <position position="820"/>
    </location>
    <ligand>
        <name>ATP</name>
        <dbReference type="ChEBI" id="CHEBI:30616"/>
        <label>2</label>
    </ligand>
</feature>
<feature type="binding site" evidence="1">
    <location>
        <position position="820"/>
    </location>
    <ligand>
        <name>Mg(2+)</name>
        <dbReference type="ChEBI" id="CHEBI:18420"/>
        <label>3</label>
    </ligand>
</feature>
<feature type="binding site" evidence="1">
    <location>
        <position position="820"/>
    </location>
    <ligand>
        <name>Mg(2+)</name>
        <dbReference type="ChEBI" id="CHEBI:18420"/>
        <label>4</label>
    </ligand>
</feature>
<feature type="binding site" evidence="1">
    <location>
        <position position="820"/>
    </location>
    <ligand>
        <name>Mn(2+)</name>
        <dbReference type="ChEBI" id="CHEBI:29035"/>
        <label>3</label>
    </ligand>
</feature>
<feature type="binding site" evidence="1">
    <location>
        <position position="820"/>
    </location>
    <ligand>
        <name>Mn(2+)</name>
        <dbReference type="ChEBI" id="CHEBI:29035"/>
        <label>4</label>
    </ligand>
</feature>
<feature type="binding site" evidence="1">
    <location>
        <position position="822"/>
    </location>
    <ligand>
        <name>Mg(2+)</name>
        <dbReference type="ChEBI" id="CHEBI:18420"/>
        <label>4</label>
    </ligand>
</feature>
<feature type="binding site" evidence="1">
    <location>
        <position position="822"/>
    </location>
    <ligand>
        <name>Mn(2+)</name>
        <dbReference type="ChEBI" id="CHEBI:29035"/>
        <label>4</label>
    </ligand>
</feature>
<sequence>MDIKKILVIGSGAIKVAEAAEFDYSGSQALKAFREEGIKTVLVNPNIATIQTSKFLADRVYFIPIQRQFLAEVIEQERPDAIACGFGGQTALSACVDLDEAGVLEKYGVRVVGTPVRGIKRALSRDLFQKAMREAGIPVPPSSPAKSPEEAIEIARYLGYPVVVRVSFNLGGAGAFVARSEEALKARIYKAFAQSAIGEVLVEKYLEGWKEIEFEVVRDAYDNVAAVVCMENIDPMGVHTGDSIVVAPCLTLTDEEYQTARNISIGVVRTIELIGEGNVQVAINYAGPEQYAIETNPRMSRSSALASKASGYPLAYIAAKLALGYRLDEVLNQVTRRTVASFEPALDYIVVKHPRWESDRFGVTEGLGPEMMSIGEAMGIGRTLEEAWQKAVRMIDIGEPGLVGGPMFQSLTLEEALKCIKDYVPYWPICAAKAIYLGVSVEEIYKINKVDKFFLNAIKRIVDVYKRLEAGEVDLDEAKVLGFSDWQIAKALGKSVDEIRAMRRRPVVKKIDTLAGEWPADTNYLYLTYGGQYDDKTPGVDYLVVGAGVFRIGVSVEFDWSTVTLATELKNRGYRVAILNYNPETVSTDWDIVDKLYFDEISVERVLDIVEKEGNGVTVVLYAGGQIGQRLYVPLEKVGVKIGGTRAKSIDMAEDRGKFSKLLDRLGIKQPPWLYAASVEEAVKLAEGLGFPVLLRPSYVLGGTYMAVAYNKEELINFLSKAAKVSGEYPVVISKFMPRGIEAEVDAVSDGVKIVATPIEHIEPPGVHSGDSTMVLPPRRLEEWAVKKMIDIAHTLAVELEVKGPLNVQFIVQDDVYVIEANLRVSRSMPLVSKATGVNYMSLVADVLTHGRLAVDEERITLKPSKWWVKSPQFSWARLRGAYPRLGPVMYSTGEVASNGSVFEEALLKSWLSATPNKIPSKTALIYTYDPHHEELLRQAAGLLSWRLEIYTPEQLGGKIAEMLKWRKIDIVMTAGITPEKDFHVRRTAADTNTPLVLDSTLAVELAKAFNWYYKNGKLEVAPW</sequence>
<protein>
    <recommendedName>
        <fullName evidence="1">Carbamoyl phosphate synthase large chain</fullName>
        <ecNumber evidence="1">6.3.4.16</ecNumber>
        <ecNumber evidence="1">6.3.5.5</ecNumber>
    </recommendedName>
    <alternativeName>
        <fullName evidence="1">Carbamoyl phosphate synthetase ammonia chain</fullName>
    </alternativeName>
</protein>
<keyword id="KW-0028">Amino-acid biosynthesis</keyword>
<keyword id="KW-0055">Arginine biosynthesis</keyword>
<keyword id="KW-0067">ATP-binding</keyword>
<keyword id="KW-0436">Ligase</keyword>
<keyword id="KW-0460">Magnesium</keyword>
<keyword id="KW-0464">Manganese</keyword>
<keyword id="KW-0479">Metal-binding</keyword>
<keyword id="KW-0547">Nucleotide-binding</keyword>
<keyword id="KW-0665">Pyrimidine biosynthesis</keyword>
<keyword id="KW-1185">Reference proteome</keyword>
<keyword id="KW-0677">Repeat</keyword>
<reference key="1">
    <citation type="journal article" date="2002" name="Proc. Natl. Acad. Sci. U.S.A.">
        <title>Genome sequence of the hyperthermophilic crenarchaeon Pyrobaculum aerophilum.</title>
        <authorList>
            <person name="Fitz-Gibbon S.T."/>
            <person name="Ladner H."/>
            <person name="Kim U.-J."/>
            <person name="Stetter K.O."/>
            <person name="Simon M.I."/>
            <person name="Miller J.H."/>
        </authorList>
    </citation>
    <scope>NUCLEOTIDE SEQUENCE [LARGE SCALE GENOMIC DNA]</scope>
    <source>
        <strain>ATCC 51768 / DSM 7523 / JCM 9630 / CIP 104966 / NBRC 100827 / IM2</strain>
    </source>
</reference>
<name>CARB_PYRAE</name>
<gene>
    <name evidence="1" type="primary">carB</name>
    <name type="ordered locus">PAE0947</name>
</gene>
<evidence type="ECO:0000255" key="1">
    <source>
        <dbReference type="HAMAP-Rule" id="MF_01210"/>
    </source>
</evidence>
<proteinExistence type="inferred from homology"/>
<accession>Q8ZY48</accession>
<dbReference type="EC" id="6.3.4.16" evidence="1"/>
<dbReference type="EC" id="6.3.5.5" evidence="1"/>
<dbReference type="EMBL" id="AE009441">
    <property type="protein sequence ID" value="AAL63148.1"/>
    <property type="molecule type" value="Genomic_DNA"/>
</dbReference>
<dbReference type="RefSeq" id="WP_011007620.1">
    <property type="nucleotide sequence ID" value="NC_003364.1"/>
</dbReference>
<dbReference type="SMR" id="Q8ZY48"/>
<dbReference type="FunCoup" id="Q8ZY48">
    <property type="interactions" value="267"/>
</dbReference>
<dbReference type="STRING" id="178306.PAE0947"/>
<dbReference type="EnsemblBacteria" id="AAL63148">
    <property type="protein sequence ID" value="AAL63148"/>
    <property type="gene ID" value="PAE0947"/>
</dbReference>
<dbReference type="GeneID" id="1465383"/>
<dbReference type="KEGG" id="pai:PAE0947"/>
<dbReference type="PATRIC" id="fig|178306.9.peg.701"/>
<dbReference type="eggNOG" id="arCOG01594">
    <property type="taxonomic scope" value="Archaea"/>
</dbReference>
<dbReference type="HOGENOM" id="CLU_000513_1_3_2"/>
<dbReference type="InParanoid" id="Q8ZY48"/>
<dbReference type="UniPathway" id="UPA00068">
    <property type="reaction ID" value="UER00171"/>
</dbReference>
<dbReference type="UniPathway" id="UPA00070">
    <property type="reaction ID" value="UER00115"/>
</dbReference>
<dbReference type="Proteomes" id="UP000002439">
    <property type="component" value="Chromosome"/>
</dbReference>
<dbReference type="GO" id="GO:0005737">
    <property type="term" value="C:cytoplasm"/>
    <property type="evidence" value="ECO:0000318"/>
    <property type="project" value="GO_Central"/>
</dbReference>
<dbReference type="GO" id="GO:0005524">
    <property type="term" value="F:ATP binding"/>
    <property type="evidence" value="ECO:0007669"/>
    <property type="project" value="UniProtKB-UniRule"/>
</dbReference>
<dbReference type="GO" id="GO:0004087">
    <property type="term" value="F:carbamoyl-phosphate synthase (ammonia) activity"/>
    <property type="evidence" value="ECO:0007669"/>
    <property type="project" value="RHEA"/>
</dbReference>
<dbReference type="GO" id="GO:0004088">
    <property type="term" value="F:carbamoyl-phosphate synthase (glutamine-hydrolyzing) activity"/>
    <property type="evidence" value="ECO:0007669"/>
    <property type="project" value="UniProtKB-UniRule"/>
</dbReference>
<dbReference type="GO" id="GO:0046872">
    <property type="term" value="F:metal ion binding"/>
    <property type="evidence" value="ECO:0007669"/>
    <property type="project" value="UniProtKB-KW"/>
</dbReference>
<dbReference type="GO" id="GO:0044205">
    <property type="term" value="P:'de novo' UMP biosynthetic process"/>
    <property type="evidence" value="ECO:0007669"/>
    <property type="project" value="UniProtKB-UniRule"/>
</dbReference>
<dbReference type="GO" id="GO:0006541">
    <property type="term" value="P:glutamine metabolic process"/>
    <property type="evidence" value="ECO:0000318"/>
    <property type="project" value="GO_Central"/>
</dbReference>
<dbReference type="GO" id="GO:0006526">
    <property type="term" value="P:L-arginine biosynthetic process"/>
    <property type="evidence" value="ECO:0007669"/>
    <property type="project" value="UniProtKB-UniRule"/>
</dbReference>
<dbReference type="FunFam" id="3.30.1490.20:FF:000001">
    <property type="entry name" value="Carbamoyl-phosphate synthase large chain"/>
    <property type="match status" value="1"/>
</dbReference>
<dbReference type="FunFam" id="3.30.470.20:FF:000001">
    <property type="entry name" value="Carbamoyl-phosphate synthase large chain"/>
    <property type="match status" value="1"/>
</dbReference>
<dbReference type="FunFam" id="3.30.470.20:FF:000026">
    <property type="entry name" value="Carbamoyl-phosphate synthase large chain"/>
    <property type="match status" value="1"/>
</dbReference>
<dbReference type="FunFam" id="3.40.50.20:FF:000001">
    <property type="entry name" value="Carbamoyl-phosphate synthase large chain"/>
    <property type="match status" value="2"/>
</dbReference>
<dbReference type="Gene3D" id="3.40.50.20">
    <property type="match status" value="2"/>
</dbReference>
<dbReference type="Gene3D" id="3.30.1490.20">
    <property type="entry name" value="ATP-grasp fold, A domain"/>
    <property type="match status" value="1"/>
</dbReference>
<dbReference type="Gene3D" id="3.30.470.20">
    <property type="entry name" value="ATP-grasp fold, B domain"/>
    <property type="match status" value="2"/>
</dbReference>
<dbReference type="Gene3D" id="1.10.1030.10">
    <property type="entry name" value="Carbamoyl-phosphate synthetase, large subunit oligomerisation domain"/>
    <property type="match status" value="1"/>
</dbReference>
<dbReference type="HAMAP" id="MF_01210_A">
    <property type="entry name" value="CPSase_L_chain_A"/>
    <property type="match status" value="1"/>
</dbReference>
<dbReference type="InterPro" id="IPR011761">
    <property type="entry name" value="ATP-grasp"/>
</dbReference>
<dbReference type="InterPro" id="IPR013815">
    <property type="entry name" value="ATP_grasp_subdomain_1"/>
</dbReference>
<dbReference type="InterPro" id="IPR006275">
    <property type="entry name" value="CarbamoylP_synth_lsu"/>
</dbReference>
<dbReference type="InterPro" id="IPR005480">
    <property type="entry name" value="CarbamoylP_synth_lsu_oligo"/>
</dbReference>
<dbReference type="InterPro" id="IPR036897">
    <property type="entry name" value="CarbamoylP_synth_lsu_oligo_sf"/>
</dbReference>
<dbReference type="InterPro" id="IPR005479">
    <property type="entry name" value="CbamoylP_synth_lsu-like_ATP-bd"/>
</dbReference>
<dbReference type="InterPro" id="IPR005483">
    <property type="entry name" value="CbamoylP_synth_lsu_CPSase_dom"/>
</dbReference>
<dbReference type="InterPro" id="IPR011607">
    <property type="entry name" value="MGS-like_dom"/>
</dbReference>
<dbReference type="InterPro" id="IPR016185">
    <property type="entry name" value="PreATP-grasp_dom_sf"/>
</dbReference>
<dbReference type="NCBIfam" id="TIGR01369">
    <property type="entry name" value="CPSaseII_lrg"/>
    <property type="match status" value="1"/>
</dbReference>
<dbReference type="NCBIfam" id="NF003671">
    <property type="entry name" value="PRK05294.1"/>
    <property type="match status" value="1"/>
</dbReference>
<dbReference type="NCBIfam" id="NF009455">
    <property type="entry name" value="PRK12815.1"/>
    <property type="match status" value="1"/>
</dbReference>
<dbReference type="PANTHER" id="PTHR11405:SF53">
    <property type="entry name" value="CARBAMOYL-PHOSPHATE SYNTHASE [AMMONIA], MITOCHONDRIAL"/>
    <property type="match status" value="1"/>
</dbReference>
<dbReference type="PANTHER" id="PTHR11405">
    <property type="entry name" value="CARBAMOYLTRANSFERASE FAMILY MEMBER"/>
    <property type="match status" value="1"/>
</dbReference>
<dbReference type="Pfam" id="PF02786">
    <property type="entry name" value="CPSase_L_D2"/>
    <property type="match status" value="2"/>
</dbReference>
<dbReference type="Pfam" id="PF02787">
    <property type="entry name" value="CPSase_L_D3"/>
    <property type="match status" value="1"/>
</dbReference>
<dbReference type="PRINTS" id="PR00098">
    <property type="entry name" value="CPSASE"/>
</dbReference>
<dbReference type="SMART" id="SM01096">
    <property type="entry name" value="CPSase_L_D3"/>
    <property type="match status" value="1"/>
</dbReference>
<dbReference type="SUPFAM" id="SSF48108">
    <property type="entry name" value="Carbamoyl phosphate synthetase, large subunit connection domain"/>
    <property type="match status" value="1"/>
</dbReference>
<dbReference type="SUPFAM" id="SSF56059">
    <property type="entry name" value="Glutathione synthetase ATP-binding domain-like"/>
    <property type="match status" value="2"/>
</dbReference>
<dbReference type="SUPFAM" id="SSF52440">
    <property type="entry name" value="PreATP-grasp domain"/>
    <property type="match status" value="2"/>
</dbReference>
<dbReference type="PROSITE" id="PS50975">
    <property type="entry name" value="ATP_GRASP"/>
    <property type="match status" value="2"/>
</dbReference>
<dbReference type="PROSITE" id="PS00867">
    <property type="entry name" value="CPSASE_2"/>
    <property type="match status" value="1"/>
</dbReference>
<dbReference type="PROSITE" id="PS51855">
    <property type="entry name" value="MGS"/>
    <property type="match status" value="1"/>
</dbReference>
<comment type="function">
    <text evidence="1">Large subunit of the glutamine-dependent carbamoyl phosphate synthetase (CPSase). CPSase catalyzes the formation of carbamoyl phosphate from the ammonia moiety of glutamine, carbonate, and phosphate donated by ATP, constituting the first step of 2 biosynthetic pathways, one leading to arginine and/or urea and the other to pyrimidine nucleotides. The large subunit (synthetase) binds the substrates ammonia (free or transferred from glutamine from the small subunit), hydrogencarbonate and ATP and carries out an ATP-coupled ligase reaction, activating hydrogencarbonate by forming carboxy phosphate which reacts with ammonia to form carbamoyl phosphate.</text>
</comment>
<comment type="catalytic activity">
    <reaction evidence="1">
        <text>hydrogencarbonate + L-glutamine + 2 ATP + H2O = carbamoyl phosphate + L-glutamate + 2 ADP + phosphate + 2 H(+)</text>
        <dbReference type="Rhea" id="RHEA:18633"/>
        <dbReference type="ChEBI" id="CHEBI:15377"/>
        <dbReference type="ChEBI" id="CHEBI:15378"/>
        <dbReference type="ChEBI" id="CHEBI:17544"/>
        <dbReference type="ChEBI" id="CHEBI:29985"/>
        <dbReference type="ChEBI" id="CHEBI:30616"/>
        <dbReference type="ChEBI" id="CHEBI:43474"/>
        <dbReference type="ChEBI" id="CHEBI:58228"/>
        <dbReference type="ChEBI" id="CHEBI:58359"/>
        <dbReference type="ChEBI" id="CHEBI:456216"/>
        <dbReference type="EC" id="6.3.5.5"/>
    </reaction>
</comment>
<comment type="catalytic activity">
    <molecule>Carbamoyl phosphate synthase large chain</molecule>
    <reaction evidence="1">
        <text>hydrogencarbonate + NH4(+) + 2 ATP = carbamoyl phosphate + 2 ADP + phosphate + 2 H(+)</text>
        <dbReference type="Rhea" id="RHEA:18029"/>
        <dbReference type="ChEBI" id="CHEBI:15378"/>
        <dbReference type="ChEBI" id="CHEBI:17544"/>
        <dbReference type="ChEBI" id="CHEBI:28938"/>
        <dbReference type="ChEBI" id="CHEBI:30616"/>
        <dbReference type="ChEBI" id="CHEBI:43474"/>
        <dbReference type="ChEBI" id="CHEBI:58228"/>
        <dbReference type="ChEBI" id="CHEBI:456216"/>
        <dbReference type="EC" id="6.3.4.16"/>
    </reaction>
</comment>
<comment type="cofactor">
    <cofactor evidence="1">
        <name>Mg(2+)</name>
        <dbReference type="ChEBI" id="CHEBI:18420"/>
    </cofactor>
    <cofactor evidence="1">
        <name>Mn(2+)</name>
        <dbReference type="ChEBI" id="CHEBI:29035"/>
    </cofactor>
    <text evidence="1">Binds 4 Mg(2+) or Mn(2+) ions per subunit.</text>
</comment>
<comment type="pathway">
    <text evidence="1">Amino-acid biosynthesis; L-arginine biosynthesis; carbamoyl phosphate from bicarbonate: step 1/1.</text>
</comment>
<comment type="pathway">
    <text evidence="1">Pyrimidine metabolism; UMP biosynthesis via de novo pathway; (S)-dihydroorotate from bicarbonate: step 1/3.</text>
</comment>
<comment type="subunit">
    <text evidence="1">Composed of two chains; the small (or glutamine) chain promotes the hydrolysis of glutamine to ammonia, which is used by the large (or ammonia) chain to synthesize carbamoyl phosphate. Tetramer of heterodimers (alpha,beta)4.</text>
</comment>
<comment type="domain">
    <text evidence="1">The large subunit is composed of 2 ATP-grasp domains that are involved in binding the 2 ATP molecules needed for carbamoyl phosphate synthesis. The N-terminal ATP-grasp domain (referred to as the carboxyphosphate synthetic component) catalyzes the ATP-dependent phosphorylation of hydrogencarbonate to carboxyphosphate and the subsequent nucleophilic attack by ammonia to form a carbamate intermediate. The C-terminal ATP-grasp domain (referred to as the carbamoyl phosphate synthetic component) then catalyzes the phosphorylation of carbamate with the second ATP to form the end product carbamoyl phosphate. The reactive and unstable enzyme intermediates are sequentially channeled from one active site to the next through the interior of the protein over a distance of at least 96 A.</text>
</comment>
<comment type="similarity">
    <text evidence="1">Belongs to the CarB family.</text>
</comment>